<comment type="function">
    <text evidence="2">Involved in the production of citral, a mixture of geranial and neral with a strong lemony scent. Reversibly oxidizes geraniol to produce geranial at half the efficiency compared with its activity with cinnamyl alcohol. Does not use nerol and neral as substrates.</text>
</comment>
<comment type="catalytic activity">
    <reaction evidence="2">
        <text>(E)-cinnamyl alcohol + NADP(+) = (E)-cinnamaldehyde + NADPH + H(+)</text>
        <dbReference type="Rhea" id="RHEA:10392"/>
        <dbReference type="ChEBI" id="CHEBI:15378"/>
        <dbReference type="ChEBI" id="CHEBI:16731"/>
        <dbReference type="ChEBI" id="CHEBI:33227"/>
        <dbReference type="ChEBI" id="CHEBI:57783"/>
        <dbReference type="ChEBI" id="CHEBI:58349"/>
        <dbReference type="EC" id="1.1.1.195"/>
    </reaction>
    <physiologicalReaction direction="right-to-left" evidence="2">
        <dbReference type="Rhea" id="RHEA:10394"/>
    </physiologicalReaction>
</comment>
<comment type="catalytic activity">
    <reaction evidence="2">
        <text>(E)-coniferol + NADP(+) = (E)-coniferaldehyde + NADPH + H(+)</text>
        <dbReference type="Rhea" id="RHEA:22444"/>
        <dbReference type="ChEBI" id="CHEBI:15378"/>
        <dbReference type="ChEBI" id="CHEBI:16547"/>
        <dbReference type="ChEBI" id="CHEBI:17745"/>
        <dbReference type="ChEBI" id="CHEBI:57783"/>
        <dbReference type="ChEBI" id="CHEBI:58349"/>
        <dbReference type="EC" id="1.1.1.195"/>
    </reaction>
    <physiologicalReaction direction="right-to-left" evidence="2">
        <dbReference type="Rhea" id="RHEA:22446"/>
    </physiologicalReaction>
</comment>
<comment type="catalytic activity">
    <reaction evidence="2">
        <text>(E)-sinapyl alcohol + NADP(+) = (E)-sinapaldehyde + NADPH + H(+)</text>
        <dbReference type="Rhea" id="RHEA:45704"/>
        <dbReference type="ChEBI" id="CHEBI:15378"/>
        <dbReference type="ChEBI" id="CHEBI:27949"/>
        <dbReference type="ChEBI" id="CHEBI:57783"/>
        <dbReference type="ChEBI" id="CHEBI:58349"/>
        <dbReference type="ChEBI" id="CHEBI:64557"/>
        <dbReference type="EC" id="1.1.1.195"/>
    </reaction>
    <physiologicalReaction direction="right-to-left" evidence="2">
        <dbReference type="Rhea" id="RHEA:45706"/>
    </physiologicalReaction>
</comment>
<comment type="catalytic activity">
    <reaction evidence="2">
        <text>(E)-4-coumaroyl alcohol + NADP(+) = (E)-4-coumaraldehyde + NADPH + H(+)</text>
        <dbReference type="Rhea" id="RHEA:45724"/>
        <dbReference type="ChEBI" id="CHEBI:15378"/>
        <dbReference type="ChEBI" id="CHEBI:28353"/>
        <dbReference type="ChEBI" id="CHEBI:57783"/>
        <dbReference type="ChEBI" id="CHEBI:58349"/>
        <dbReference type="ChEBI" id="CHEBI:64555"/>
        <dbReference type="EC" id="1.1.1.195"/>
    </reaction>
    <physiologicalReaction direction="right-to-left" evidence="2">
        <dbReference type="Rhea" id="RHEA:45726"/>
    </physiologicalReaction>
</comment>
<comment type="catalytic activity">
    <reaction evidence="2">
        <text>(E)-caffeyl alcohol + NADP(+) = (E)-caffeyl aldehyde + NADPH + H(+)</text>
        <dbReference type="Rhea" id="RHEA:45728"/>
        <dbReference type="ChEBI" id="CHEBI:15378"/>
        <dbReference type="ChEBI" id="CHEBI:28323"/>
        <dbReference type="ChEBI" id="CHEBI:31334"/>
        <dbReference type="ChEBI" id="CHEBI:57783"/>
        <dbReference type="ChEBI" id="CHEBI:58349"/>
    </reaction>
    <physiologicalReaction direction="right-to-left" evidence="2">
        <dbReference type="Rhea" id="RHEA:45730"/>
    </physiologicalReaction>
</comment>
<comment type="cofactor">
    <cofactor evidence="1">
        <name>Zn(2+)</name>
        <dbReference type="ChEBI" id="CHEBI:29105"/>
    </cofactor>
    <text evidence="1">Binds 2 Zn(2+) ions per subunit.</text>
</comment>
<comment type="activity regulation">
    <text>60% inhibition by 5 mM Ca(+), Mg(+) or Cu(+).</text>
</comment>
<comment type="biophysicochemical properties">
    <kinetics>
        <KM evidence="2">46 uM for cinnamyl alcohol</KM>
        <KM evidence="2">72 uM for geraniol</KM>
        <Vmax evidence="2">13.0 pmol/sec/ug enzyme toward cinnamyl alcohol</Vmax>
        <Vmax evidence="2">9.8 pmol/sec/ug enzyme toward geraniol</Vmax>
    </kinetics>
    <phDependence>
        <text evidence="2">Optimum pH is 8.9. Active from pH 8.5 to 9.4.</text>
    </phDependence>
</comment>
<comment type="pathway">
    <text evidence="2">Aromatic compound metabolism; phenylpropanoid biosynthesis.</text>
</comment>
<comment type="subunit">
    <text evidence="1">Homodimer.</text>
</comment>
<comment type="tissue specificity">
    <text evidence="2">Expressed in leaves, mainly in peltate glands.</text>
</comment>
<comment type="similarity">
    <text evidence="3">Belongs to the zinc-containing alcohol dehydrogenase family.</text>
</comment>
<reference key="1">
    <citation type="journal article" date="2006" name="Arch. Biochem. Biophys.">
        <title>Analysis of the enzymatic formation of citral in the glands of sweet basil.</title>
        <authorList>
            <person name="Iijima Y."/>
            <person name="Wang G."/>
            <person name="Fridman E."/>
            <person name="Pichersky E."/>
        </authorList>
    </citation>
    <scope>NUCLEOTIDE SEQUENCE [MRNA]</scope>
    <scope>FUNCTION</scope>
    <scope>TISSUE SPECIFICITY</scope>
    <scope>BIOPHYSICOCHEMICAL PROPERTIES</scope>
    <scope>PATHWAY</scope>
    <source>
        <strain>cv. SD</strain>
    </source>
</reference>
<name>CADH1_OCIBA</name>
<gene>
    <name type="primary">CAD1</name>
</gene>
<dbReference type="EC" id="1.1.1.195" evidence="2"/>
<dbReference type="EMBL" id="AY879285">
    <property type="protein sequence ID" value="AAX83108.1"/>
    <property type="molecule type" value="mRNA"/>
</dbReference>
<dbReference type="SMR" id="Q2KNL5"/>
<dbReference type="BioCyc" id="MetaCyc:MONOMER-13799"/>
<dbReference type="SABIO-RK" id="Q2KNL5"/>
<dbReference type="UniPathway" id="UPA00711"/>
<dbReference type="GO" id="GO:0045551">
    <property type="term" value="F:cinnamyl-alcohol dehydrogenase activity"/>
    <property type="evidence" value="ECO:0007669"/>
    <property type="project" value="UniProtKB-EC"/>
</dbReference>
<dbReference type="GO" id="GO:0050268">
    <property type="term" value="F:coniferyl-alcohol dehydrogenase activity"/>
    <property type="evidence" value="ECO:0007669"/>
    <property type="project" value="RHEA"/>
</dbReference>
<dbReference type="GO" id="GO:0008270">
    <property type="term" value="F:zinc ion binding"/>
    <property type="evidence" value="ECO:0007669"/>
    <property type="project" value="InterPro"/>
</dbReference>
<dbReference type="GO" id="GO:0009820">
    <property type="term" value="P:alkaloid metabolic process"/>
    <property type="evidence" value="ECO:0007669"/>
    <property type="project" value="UniProtKB-ARBA"/>
</dbReference>
<dbReference type="GO" id="GO:0009699">
    <property type="term" value="P:phenylpropanoid biosynthetic process"/>
    <property type="evidence" value="ECO:0007669"/>
    <property type="project" value="UniProtKB-UniPathway"/>
</dbReference>
<dbReference type="CDD" id="cd05283">
    <property type="entry name" value="CAD1"/>
    <property type="match status" value="1"/>
</dbReference>
<dbReference type="FunFam" id="3.40.50.720:FF:000022">
    <property type="entry name" value="Cinnamyl alcohol dehydrogenase"/>
    <property type="match status" value="1"/>
</dbReference>
<dbReference type="FunFam" id="3.90.180.10:FF:000004">
    <property type="entry name" value="probable cinnamyl alcohol dehydrogenase"/>
    <property type="match status" value="1"/>
</dbReference>
<dbReference type="FunFam" id="3.90.180.10:FF:000100">
    <property type="entry name" value="Putative cinnamyl alcohol dehydrogenase 6"/>
    <property type="match status" value="1"/>
</dbReference>
<dbReference type="Gene3D" id="3.90.180.10">
    <property type="entry name" value="Medium-chain alcohol dehydrogenases, catalytic domain"/>
    <property type="match status" value="1"/>
</dbReference>
<dbReference type="Gene3D" id="3.40.50.720">
    <property type="entry name" value="NAD(P)-binding Rossmann-like Domain"/>
    <property type="match status" value="1"/>
</dbReference>
<dbReference type="InterPro" id="IPR013149">
    <property type="entry name" value="ADH-like_C"/>
</dbReference>
<dbReference type="InterPro" id="IPR013154">
    <property type="entry name" value="ADH-like_N"/>
</dbReference>
<dbReference type="InterPro" id="IPR002328">
    <property type="entry name" value="ADH_Zn_CS"/>
</dbReference>
<dbReference type="InterPro" id="IPR047109">
    <property type="entry name" value="CAD-like"/>
</dbReference>
<dbReference type="InterPro" id="IPR011032">
    <property type="entry name" value="GroES-like_sf"/>
</dbReference>
<dbReference type="InterPro" id="IPR036291">
    <property type="entry name" value="NAD(P)-bd_dom_sf"/>
</dbReference>
<dbReference type="InterPro" id="IPR020843">
    <property type="entry name" value="PKS_ER"/>
</dbReference>
<dbReference type="PANTHER" id="PTHR42683">
    <property type="entry name" value="ALDEHYDE REDUCTASE"/>
    <property type="match status" value="1"/>
</dbReference>
<dbReference type="Pfam" id="PF08240">
    <property type="entry name" value="ADH_N"/>
    <property type="match status" value="1"/>
</dbReference>
<dbReference type="Pfam" id="PF00107">
    <property type="entry name" value="ADH_zinc_N"/>
    <property type="match status" value="1"/>
</dbReference>
<dbReference type="SMART" id="SM00829">
    <property type="entry name" value="PKS_ER"/>
    <property type="match status" value="1"/>
</dbReference>
<dbReference type="SUPFAM" id="SSF50129">
    <property type="entry name" value="GroES-like"/>
    <property type="match status" value="1"/>
</dbReference>
<dbReference type="SUPFAM" id="SSF51735">
    <property type="entry name" value="NAD(P)-binding Rossmann-fold domains"/>
    <property type="match status" value="1"/>
</dbReference>
<dbReference type="PROSITE" id="PS00059">
    <property type="entry name" value="ADH_ZINC"/>
    <property type="match status" value="1"/>
</dbReference>
<keyword id="KW-0479">Metal-binding</keyword>
<keyword id="KW-0521">NADP</keyword>
<keyword id="KW-0560">Oxidoreductase</keyword>
<keyword id="KW-0862">Zinc</keyword>
<protein>
    <recommendedName>
        <fullName>Cinnamyl alcohol dehydrogenase 1</fullName>
        <shortName>CAD 1</shortName>
        <shortName>ObaCAD1</shortName>
        <ecNumber evidence="2">1.1.1.195</ecNumber>
    </recommendedName>
</protein>
<proteinExistence type="evidence at protein level"/>
<organism>
    <name type="scientific">Ocimum basilicum</name>
    <name type="common">Sweet basil</name>
    <dbReference type="NCBI Taxonomy" id="39350"/>
    <lineage>
        <taxon>Eukaryota</taxon>
        <taxon>Viridiplantae</taxon>
        <taxon>Streptophyta</taxon>
        <taxon>Embryophyta</taxon>
        <taxon>Tracheophyta</taxon>
        <taxon>Spermatophyta</taxon>
        <taxon>Magnoliopsida</taxon>
        <taxon>eudicotyledons</taxon>
        <taxon>Gunneridae</taxon>
        <taxon>Pentapetalae</taxon>
        <taxon>asterids</taxon>
        <taxon>lamiids</taxon>
        <taxon>Lamiales</taxon>
        <taxon>Lamiaceae</taxon>
        <taxon>Nepetoideae</taxon>
        <taxon>Ocimeae</taxon>
        <taxon>Ociminae</taxon>
        <taxon>Ocimum</taxon>
    </lineage>
</organism>
<evidence type="ECO:0000250" key="1"/>
<evidence type="ECO:0000269" key="2">
    <source>
    </source>
</evidence>
<evidence type="ECO:0000305" key="3"/>
<feature type="chain" id="PRO_0000367053" description="Cinnamyl alcohol dehydrogenase 1">
    <location>
        <begin position="1"/>
        <end position="357"/>
    </location>
</feature>
<feature type="binding site" evidence="1">
    <location>
        <position position="47"/>
    </location>
    <ligand>
        <name>Zn(2+)</name>
        <dbReference type="ChEBI" id="CHEBI:29105"/>
        <label>1</label>
        <note>catalytic</note>
    </ligand>
</feature>
<feature type="binding site" evidence="1">
    <location>
        <position position="49"/>
    </location>
    <ligand>
        <name>NADP(+)</name>
        <dbReference type="ChEBI" id="CHEBI:58349"/>
    </ligand>
</feature>
<feature type="binding site" evidence="1">
    <location>
        <position position="69"/>
    </location>
    <ligand>
        <name>Zn(2+)</name>
        <dbReference type="ChEBI" id="CHEBI:29105"/>
        <label>1</label>
        <note>catalytic</note>
    </ligand>
</feature>
<feature type="binding site" evidence="1">
    <location>
        <position position="70"/>
    </location>
    <ligand>
        <name>Zn(2+)</name>
        <dbReference type="ChEBI" id="CHEBI:29105"/>
        <label>1</label>
        <note>catalytic</note>
    </ligand>
</feature>
<feature type="binding site" evidence="1">
    <location>
        <position position="100"/>
    </location>
    <ligand>
        <name>Zn(2+)</name>
        <dbReference type="ChEBI" id="CHEBI:29105"/>
        <label>2</label>
    </ligand>
</feature>
<feature type="binding site" evidence="1">
    <location>
        <position position="103"/>
    </location>
    <ligand>
        <name>Zn(2+)</name>
        <dbReference type="ChEBI" id="CHEBI:29105"/>
        <label>2</label>
    </ligand>
</feature>
<feature type="binding site" evidence="1">
    <location>
        <position position="106"/>
    </location>
    <ligand>
        <name>Zn(2+)</name>
        <dbReference type="ChEBI" id="CHEBI:29105"/>
        <label>2</label>
    </ligand>
</feature>
<feature type="binding site" evidence="1">
    <location>
        <position position="114"/>
    </location>
    <ligand>
        <name>Zn(2+)</name>
        <dbReference type="ChEBI" id="CHEBI:29105"/>
        <label>2</label>
    </ligand>
</feature>
<feature type="binding site" evidence="1">
    <location>
        <position position="163"/>
    </location>
    <ligand>
        <name>Zn(2+)</name>
        <dbReference type="ChEBI" id="CHEBI:29105"/>
        <label>1</label>
        <note>catalytic</note>
    </ligand>
</feature>
<feature type="binding site" evidence="1">
    <location>
        <position position="167"/>
    </location>
    <ligand>
        <name>NADP(+)</name>
        <dbReference type="ChEBI" id="CHEBI:58349"/>
    </ligand>
</feature>
<feature type="binding site" evidence="1">
    <location>
        <begin position="188"/>
        <end position="193"/>
    </location>
    <ligand>
        <name>NADP(+)</name>
        <dbReference type="ChEBI" id="CHEBI:58349"/>
    </ligand>
</feature>
<feature type="binding site" evidence="1">
    <location>
        <begin position="211"/>
        <end position="216"/>
    </location>
    <ligand>
        <name>NADP(+)</name>
        <dbReference type="ChEBI" id="CHEBI:58349"/>
    </ligand>
</feature>
<feature type="binding site" evidence="1">
    <location>
        <position position="251"/>
    </location>
    <ligand>
        <name>NADP(+)</name>
        <dbReference type="ChEBI" id="CHEBI:58349"/>
    </ligand>
</feature>
<feature type="binding site" evidence="1">
    <location>
        <position position="275"/>
    </location>
    <ligand>
        <name>NADP(+)</name>
        <dbReference type="ChEBI" id="CHEBI:58349"/>
    </ligand>
</feature>
<feature type="binding site" evidence="1">
    <location>
        <begin position="298"/>
        <end position="300"/>
    </location>
    <ligand>
        <name>NADP(+)</name>
        <dbReference type="ChEBI" id="CHEBI:58349"/>
    </ligand>
</feature>
<sequence length="357" mass="38769">MGSLEVERKTVGWAARDPSGVLSPYEYTLRNTGPQDVYVEVMCCGICHTDVHQIKNDLGMSNYPMVPGHEVVGEVVEVGSEVTKFRAGDVVGVGCIVGSCGNCRPCNSDIEQYCNKKIWSYNDVYPDGKPTQGGFAGAMVVDQKFVVKIPDGMAPEQAAPLLCAGVTVYSPLNHFGLKQSGLRGGILGLGGVGHMGVKIAKAMGHHVTVISSSDKKRAEALDHLGADDYLVSSDAARMQEAADSLDYIIDTVPVFHPLEPYLSLLKIDGKLILMGVVNTPLQFVSPMVMLGRKSITGSFIGSMKELAEMLEFCKEKDLSSTIEIVKMDYINTAFERLEKNDVRYRFVVDVAGSKLYQ</sequence>
<accession>Q2KNL5</accession>